<dbReference type="EC" id="2.7.11.22"/>
<dbReference type="EMBL" id="DQ288857">
    <property type="protein sequence ID" value="ABB96224.1"/>
    <property type="molecule type" value="mRNA"/>
</dbReference>
<dbReference type="EMBL" id="AK133918">
    <property type="protein sequence ID" value="BAE21925.1"/>
    <property type="molecule type" value="mRNA"/>
</dbReference>
<dbReference type="EMBL" id="AK144801">
    <property type="protein sequence ID" value="BAE26074.1"/>
    <property type="molecule type" value="mRNA"/>
</dbReference>
<dbReference type="CCDS" id="CCDS22751.1"/>
<dbReference type="RefSeq" id="NP_919426.2">
    <property type="nucleotide sequence ID" value="NM_194444.2"/>
</dbReference>
<dbReference type="RefSeq" id="NP_919428.1">
    <property type="nucleotide sequence ID" value="NM_194446.2"/>
</dbReference>
<dbReference type="SMR" id="Q3UMM4"/>
<dbReference type="BioGRID" id="231589">
    <property type="interactions" value="1"/>
</dbReference>
<dbReference type="ComplexPortal" id="CPX-327">
    <property type="entry name" value="Cyclin M-CDK10 complex"/>
</dbReference>
<dbReference type="FunCoup" id="Q3UMM4">
    <property type="interactions" value="629"/>
</dbReference>
<dbReference type="STRING" id="10090.ENSMUSP00000045527"/>
<dbReference type="iPTMnet" id="Q3UMM4"/>
<dbReference type="PhosphoSitePlus" id="Q3UMM4"/>
<dbReference type="jPOST" id="Q3UMM4"/>
<dbReference type="PaxDb" id="10090-ENSMUSP00000045527"/>
<dbReference type="ProteomicsDB" id="280037"/>
<dbReference type="Pumba" id="Q3UMM4"/>
<dbReference type="Antibodypedia" id="30892">
    <property type="antibodies" value="321 antibodies from 34 providers"/>
</dbReference>
<dbReference type="DNASU" id="234854"/>
<dbReference type="Ensembl" id="ENSMUST00000036880.8">
    <property type="protein sequence ID" value="ENSMUSP00000045527.7"/>
    <property type="gene ID" value="ENSMUSG00000033862.8"/>
</dbReference>
<dbReference type="GeneID" id="234854"/>
<dbReference type="KEGG" id="mmu:234854"/>
<dbReference type="UCSC" id="uc009nun.2">
    <property type="organism name" value="mouse"/>
</dbReference>
<dbReference type="AGR" id="MGI:2448549"/>
<dbReference type="CTD" id="8558"/>
<dbReference type="MGI" id="MGI:2448549">
    <property type="gene designation" value="Cdk10"/>
</dbReference>
<dbReference type="VEuPathDB" id="HostDB:ENSMUSG00000033862"/>
<dbReference type="eggNOG" id="KOG0663">
    <property type="taxonomic scope" value="Eukaryota"/>
</dbReference>
<dbReference type="GeneTree" id="ENSGT00940000158102"/>
<dbReference type="HOGENOM" id="CLU_000288_181_1_1"/>
<dbReference type="InParanoid" id="Q3UMM4"/>
<dbReference type="OMA" id="WVARATN"/>
<dbReference type="OrthoDB" id="1732493at2759"/>
<dbReference type="PhylomeDB" id="Q3UMM4"/>
<dbReference type="TreeFam" id="TF101026"/>
<dbReference type="BioGRID-ORCS" id="234854">
    <property type="hits" value="7 hits in 82 CRISPR screens"/>
</dbReference>
<dbReference type="ChiTaRS" id="Cdk10">
    <property type="organism name" value="mouse"/>
</dbReference>
<dbReference type="PRO" id="PR:Q3UMM4"/>
<dbReference type="Proteomes" id="UP000000589">
    <property type="component" value="Chromosome 8"/>
</dbReference>
<dbReference type="RNAct" id="Q3UMM4">
    <property type="molecule type" value="protein"/>
</dbReference>
<dbReference type="Bgee" id="ENSMUSG00000033862">
    <property type="expression patterns" value="Expressed in ear vesicle and 216 other cell types or tissues"/>
</dbReference>
<dbReference type="ExpressionAtlas" id="Q3UMM4">
    <property type="expression patterns" value="baseline and differential"/>
</dbReference>
<dbReference type="GO" id="GO:0036064">
    <property type="term" value="C:ciliary basal body"/>
    <property type="evidence" value="ECO:0000250"/>
    <property type="project" value="UniProtKB"/>
</dbReference>
<dbReference type="GO" id="GO:0000307">
    <property type="term" value="C:cyclin-dependent protein kinase holoenzyme complex"/>
    <property type="evidence" value="ECO:0000250"/>
    <property type="project" value="ComplexPortal"/>
</dbReference>
<dbReference type="GO" id="GO:0005737">
    <property type="term" value="C:cytoplasm"/>
    <property type="evidence" value="ECO:0007669"/>
    <property type="project" value="UniProtKB-KW"/>
</dbReference>
<dbReference type="GO" id="GO:0005634">
    <property type="term" value="C:nucleus"/>
    <property type="evidence" value="ECO:0000266"/>
    <property type="project" value="MGI"/>
</dbReference>
<dbReference type="GO" id="GO:0005524">
    <property type="term" value="F:ATP binding"/>
    <property type="evidence" value="ECO:0007669"/>
    <property type="project" value="UniProtKB-KW"/>
</dbReference>
<dbReference type="GO" id="GO:0097472">
    <property type="term" value="F:cyclin-dependent protein kinase activity"/>
    <property type="evidence" value="ECO:0000316"/>
    <property type="project" value="MGI"/>
</dbReference>
<dbReference type="GO" id="GO:0004693">
    <property type="term" value="F:cyclin-dependent protein serine/threonine kinase activity"/>
    <property type="evidence" value="ECO:0007669"/>
    <property type="project" value="UniProtKB-EC"/>
</dbReference>
<dbReference type="GO" id="GO:0106310">
    <property type="term" value="F:protein serine kinase activity"/>
    <property type="evidence" value="ECO:0007669"/>
    <property type="project" value="RHEA"/>
</dbReference>
<dbReference type="GO" id="GO:0004674">
    <property type="term" value="F:protein serine/threonine kinase activity"/>
    <property type="evidence" value="ECO:0000250"/>
    <property type="project" value="UniProtKB"/>
</dbReference>
<dbReference type="GO" id="GO:0030030">
    <property type="term" value="P:cell projection organization"/>
    <property type="evidence" value="ECO:0007669"/>
    <property type="project" value="UniProtKB-KW"/>
</dbReference>
<dbReference type="GO" id="GO:1902018">
    <property type="term" value="P:negative regulation of cilium assembly"/>
    <property type="evidence" value="ECO:0000250"/>
    <property type="project" value="UniProtKB"/>
</dbReference>
<dbReference type="GO" id="GO:0018107">
    <property type="term" value="P:peptidyl-threonine phosphorylation"/>
    <property type="evidence" value="ECO:0000250"/>
    <property type="project" value="UniProtKB"/>
</dbReference>
<dbReference type="GO" id="GO:0043410">
    <property type="term" value="P:positive regulation of MAPK cascade"/>
    <property type="evidence" value="ECO:0000316"/>
    <property type="project" value="MGI"/>
</dbReference>
<dbReference type="GO" id="GO:0032956">
    <property type="term" value="P:regulation of actin cytoskeleton organization"/>
    <property type="evidence" value="ECO:0000250"/>
    <property type="project" value="UniProtKB"/>
</dbReference>
<dbReference type="GO" id="GO:1902749">
    <property type="term" value="P:regulation of cell cycle G2/M phase transition"/>
    <property type="evidence" value="ECO:0000250"/>
    <property type="project" value="ComplexPortal"/>
</dbReference>
<dbReference type="GO" id="GO:0007346">
    <property type="term" value="P:regulation of mitotic cell cycle"/>
    <property type="evidence" value="ECO:0007669"/>
    <property type="project" value="InterPro"/>
</dbReference>
<dbReference type="CDD" id="cd07845">
    <property type="entry name" value="STKc_CDK10"/>
    <property type="match status" value="1"/>
</dbReference>
<dbReference type="FunFam" id="1.10.510.10:FF:000289">
    <property type="entry name" value="cyclin-dependent kinase 10 isoform X2"/>
    <property type="match status" value="1"/>
</dbReference>
<dbReference type="FunFam" id="3.30.200.20:FF:000256">
    <property type="entry name" value="cyclin-dependent kinase 10 isoform X2"/>
    <property type="match status" value="1"/>
</dbReference>
<dbReference type="Gene3D" id="3.30.200.20">
    <property type="entry name" value="Phosphorylase Kinase, domain 1"/>
    <property type="match status" value="1"/>
</dbReference>
<dbReference type="Gene3D" id="1.10.510.10">
    <property type="entry name" value="Transferase(Phosphotransferase) domain 1"/>
    <property type="match status" value="1"/>
</dbReference>
<dbReference type="InterPro" id="IPR050108">
    <property type="entry name" value="CDK"/>
</dbReference>
<dbReference type="InterPro" id="IPR011009">
    <property type="entry name" value="Kinase-like_dom_sf"/>
</dbReference>
<dbReference type="InterPro" id="IPR000719">
    <property type="entry name" value="Prot_kinase_dom"/>
</dbReference>
<dbReference type="InterPro" id="IPR017441">
    <property type="entry name" value="Protein_kinase_ATP_BS"/>
</dbReference>
<dbReference type="InterPro" id="IPR008271">
    <property type="entry name" value="Ser/Thr_kinase_AS"/>
</dbReference>
<dbReference type="InterPro" id="IPR044093">
    <property type="entry name" value="STKc_CDK10"/>
</dbReference>
<dbReference type="PANTHER" id="PTHR24056">
    <property type="entry name" value="CELL DIVISION PROTEIN KINASE"/>
    <property type="match status" value="1"/>
</dbReference>
<dbReference type="PANTHER" id="PTHR24056:SF508">
    <property type="entry name" value="CYCLIN-DEPENDENT KINASE 10"/>
    <property type="match status" value="1"/>
</dbReference>
<dbReference type="Pfam" id="PF00069">
    <property type="entry name" value="Pkinase"/>
    <property type="match status" value="1"/>
</dbReference>
<dbReference type="SMART" id="SM00220">
    <property type="entry name" value="S_TKc"/>
    <property type="match status" value="1"/>
</dbReference>
<dbReference type="SUPFAM" id="SSF56112">
    <property type="entry name" value="Protein kinase-like (PK-like)"/>
    <property type="match status" value="1"/>
</dbReference>
<dbReference type="PROSITE" id="PS00107">
    <property type="entry name" value="PROTEIN_KINASE_ATP"/>
    <property type="match status" value="1"/>
</dbReference>
<dbReference type="PROSITE" id="PS50011">
    <property type="entry name" value="PROTEIN_KINASE_DOM"/>
    <property type="match status" value="1"/>
</dbReference>
<dbReference type="PROSITE" id="PS00108">
    <property type="entry name" value="PROTEIN_KINASE_ST"/>
    <property type="match status" value="1"/>
</dbReference>
<feature type="chain" id="PRO_0000261028" description="Cyclin-dependent kinase 10">
    <location>
        <begin position="1"/>
        <end position="360"/>
    </location>
</feature>
<feature type="domain" description="Protein kinase" evidence="2">
    <location>
        <begin position="39"/>
        <end position="323"/>
    </location>
</feature>
<feature type="region of interest" description="Disordered" evidence="4">
    <location>
        <begin position="334"/>
        <end position="360"/>
    </location>
</feature>
<feature type="active site" description="Proton acceptor" evidence="2 3">
    <location>
        <position position="163"/>
    </location>
</feature>
<feature type="binding site" evidence="2">
    <location>
        <begin position="45"/>
        <end position="53"/>
    </location>
    <ligand>
        <name>ATP</name>
        <dbReference type="ChEBI" id="CHEBI:30616"/>
    </ligand>
</feature>
<feature type="binding site" evidence="2">
    <location>
        <position position="68"/>
    </location>
    <ligand>
        <name>ATP</name>
        <dbReference type="ChEBI" id="CHEBI:30616"/>
    </ligand>
</feature>
<feature type="modified residue" description="Phosphothreonine" evidence="7">
    <location>
        <position position="196"/>
    </location>
</feature>
<proteinExistence type="evidence at protein level"/>
<evidence type="ECO:0000250" key="1">
    <source>
        <dbReference type="UniProtKB" id="Q15131"/>
    </source>
</evidence>
<evidence type="ECO:0000255" key="2">
    <source>
        <dbReference type="PROSITE-ProRule" id="PRU00159"/>
    </source>
</evidence>
<evidence type="ECO:0000255" key="3">
    <source>
        <dbReference type="PROSITE-ProRule" id="PRU10027"/>
    </source>
</evidence>
<evidence type="ECO:0000256" key="4">
    <source>
        <dbReference type="SAM" id="MobiDB-lite"/>
    </source>
</evidence>
<evidence type="ECO:0000269" key="5">
    <source>
    </source>
</evidence>
<evidence type="ECO:0000305" key="6"/>
<evidence type="ECO:0007744" key="7">
    <source>
    </source>
</evidence>
<reference key="1">
    <citation type="journal article" date="2006" name="J. Cell. Biochem.">
        <title>Identification of murine cdk10: association with Ets2 transcription factor and effects on the cell cycle.</title>
        <authorList>
            <person name="Bagella L."/>
            <person name="Giacinti C."/>
            <person name="Simone C."/>
            <person name="Giordano A."/>
        </authorList>
    </citation>
    <scope>NUCLEOTIDE SEQUENCE [MRNA]</scope>
</reference>
<reference key="2">
    <citation type="journal article" date="2005" name="Science">
        <title>The transcriptional landscape of the mammalian genome.</title>
        <authorList>
            <person name="Carninci P."/>
            <person name="Kasukawa T."/>
            <person name="Katayama S."/>
            <person name="Gough J."/>
            <person name="Frith M.C."/>
            <person name="Maeda N."/>
            <person name="Oyama R."/>
            <person name="Ravasi T."/>
            <person name="Lenhard B."/>
            <person name="Wells C."/>
            <person name="Kodzius R."/>
            <person name="Shimokawa K."/>
            <person name="Bajic V.B."/>
            <person name="Brenner S.E."/>
            <person name="Batalov S."/>
            <person name="Forrest A.R."/>
            <person name="Zavolan M."/>
            <person name="Davis M.J."/>
            <person name="Wilming L.G."/>
            <person name="Aidinis V."/>
            <person name="Allen J.E."/>
            <person name="Ambesi-Impiombato A."/>
            <person name="Apweiler R."/>
            <person name="Aturaliya R.N."/>
            <person name="Bailey T.L."/>
            <person name="Bansal M."/>
            <person name="Baxter L."/>
            <person name="Beisel K.W."/>
            <person name="Bersano T."/>
            <person name="Bono H."/>
            <person name="Chalk A.M."/>
            <person name="Chiu K.P."/>
            <person name="Choudhary V."/>
            <person name="Christoffels A."/>
            <person name="Clutterbuck D.R."/>
            <person name="Crowe M.L."/>
            <person name="Dalla E."/>
            <person name="Dalrymple B.P."/>
            <person name="de Bono B."/>
            <person name="Della Gatta G."/>
            <person name="di Bernardo D."/>
            <person name="Down T."/>
            <person name="Engstrom P."/>
            <person name="Fagiolini M."/>
            <person name="Faulkner G."/>
            <person name="Fletcher C.F."/>
            <person name="Fukushima T."/>
            <person name="Furuno M."/>
            <person name="Futaki S."/>
            <person name="Gariboldi M."/>
            <person name="Georgii-Hemming P."/>
            <person name="Gingeras T.R."/>
            <person name="Gojobori T."/>
            <person name="Green R.E."/>
            <person name="Gustincich S."/>
            <person name="Harbers M."/>
            <person name="Hayashi Y."/>
            <person name="Hensch T.K."/>
            <person name="Hirokawa N."/>
            <person name="Hill D."/>
            <person name="Huminiecki L."/>
            <person name="Iacono M."/>
            <person name="Ikeo K."/>
            <person name="Iwama A."/>
            <person name="Ishikawa T."/>
            <person name="Jakt M."/>
            <person name="Kanapin A."/>
            <person name="Katoh M."/>
            <person name="Kawasawa Y."/>
            <person name="Kelso J."/>
            <person name="Kitamura H."/>
            <person name="Kitano H."/>
            <person name="Kollias G."/>
            <person name="Krishnan S.P."/>
            <person name="Kruger A."/>
            <person name="Kummerfeld S.K."/>
            <person name="Kurochkin I.V."/>
            <person name="Lareau L.F."/>
            <person name="Lazarevic D."/>
            <person name="Lipovich L."/>
            <person name="Liu J."/>
            <person name="Liuni S."/>
            <person name="McWilliam S."/>
            <person name="Madan Babu M."/>
            <person name="Madera M."/>
            <person name="Marchionni L."/>
            <person name="Matsuda H."/>
            <person name="Matsuzawa S."/>
            <person name="Miki H."/>
            <person name="Mignone F."/>
            <person name="Miyake S."/>
            <person name="Morris K."/>
            <person name="Mottagui-Tabar S."/>
            <person name="Mulder N."/>
            <person name="Nakano N."/>
            <person name="Nakauchi H."/>
            <person name="Ng P."/>
            <person name="Nilsson R."/>
            <person name="Nishiguchi S."/>
            <person name="Nishikawa S."/>
            <person name="Nori F."/>
            <person name="Ohara O."/>
            <person name="Okazaki Y."/>
            <person name="Orlando V."/>
            <person name="Pang K.C."/>
            <person name="Pavan W.J."/>
            <person name="Pavesi G."/>
            <person name="Pesole G."/>
            <person name="Petrovsky N."/>
            <person name="Piazza S."/>
            <person name="Reed J."/>
            <person name="Reid J.F."/>
            <person name="Ring B.Z."/>
            <person name="Ringwald M."/>
            <person name="Rost B."/>
            <person name="Ruan Y."/>
            <person name="Salzberg S.L."/>
            <person name="Sandelin A."/>
            <person name="Schneider C."/>
            <person name="Schoenbach C."/>
            <person name="Sekiguchi K."/>
            <person name="Semple C.A."/>
            <person name="Seno S."/>
            <person name="Sessa L."/>
            <person name="Sheng Y."/>
            <person name="Shibata Y."/>
            <person name="Shimada H."/>
            <person name="Shimada K."/>
            <person name="Silva D."/>
            <person name="Sinclair B."/>
            <person name="Sperling S."/>
            <person name="Stupka E."/>
            <person name="Sugiura K."/>
            <person name="Sultana R."/>
            <person name="Takenaka Y."/>
            <person name="Taki K."/>
            <person name="Tammoja K."/>
            <person name="Tan S.L."/>
            <person name="Tang S."/>
            <person name="Taylor M.S."/>
            <person name="Tegner J."/>
            <person name="Teichmann S.A."/>
            <person name="Ueda H.R."/>
            <person name="van Nimwegen E."/>
            <person name="Verardo R."/>
            <person name="Wei C.L."/>
            <person name="Yagi K."/>
            <person name="Yamanishi H."/>
            <person name="Zabarovsky E."/>
            <person name="Zhu S."/>
            <person name="Zimmer A."/>
            <person name="Hide W."/>
            <person name="Bult C."/>
            <person name="Grimmond S.M."/>
            <person name="Teasdale R.D."/>
            <person name="Liu E.T."/>
            <person name="Brusic V."/>
            <person name="Quackenbush J."/>
            <person name="Wahlestedt C."/>
            <person name="Mattick J.S."/>
            <person name="Hume D.A."/>
            <person name="Kai C."/>
            <person name="Sasaki D."/>
            <person name="Tomaru Y."/>
            <person name="Fukuda S."/>
            <person name="Kanamori-Katayama M."/>
            <person name="Suzuki M."/>
            <person name="Aoki J."/>
            <person name="Arakawa T."/>
            <person name="Iida J."/>
            <person name="Imamura K."/>
            <person name="Itoh M."/>
            <person name="Kato T."/>
            <person name="Kawaji H."/>
            <person name="Kawagashira N."/>
            <person name="Kawashima T."/>
            <person name="Kojima M."/>
            <person name="Kondo S."/>
            <person name="Konno H."/>
            <person name="Nakano K."/>
            <person name="Ninomiya N."/>
            <person name="Nishio T."/>
            <person name="Okada M."/>
            <person name="Plessy C."/>
            <person name="Shibata K."/>
            <person name="Shiraki T."/>
            <person name="Suzuki S."/>
            <person name="Tagami M."/>
            <person name="Waki K."/>
            <person name="Watahiki A."/>
            <person name="Okamura-Oho Y."/>
            <person name="Suzuki H."/>
            <person name="Kawai J."/>
            <person name="Hayashizaki Y."/>
        </authorList>
    </citation>
    <scope>NUCLEOTIDE SEQUENCE [LARGE SCALE MRNA]</scope>
    <source>
        <tissue>Lung</tissue>
    </source>
</reference>
<reference key="3">
    <citation type="journal article" date="2010" name="Cell">
        <title>A tissue-specific atlas of mouse protein phosphorylation and expression.</title>
        <authorList>
            <person name="Huttlin E.L."/>
            <person name="Jedrychowski M.P."/>
            <person name="Elias J.E."/>
            <person name="Goswami T."/>
            <person name="Rad R."/>
            <person name="Beausoleil S.A."/>
            <person name="Villen J."/>
            <person name="Haas W."/>
            <person name="Sowa M.E."/>
            <person name="Gygi S.P."/>
        </authorList>
    </citation>
    <scope>PHOSPHORYLATION [LARGE SCALE ANALYSIS] AT THR-196</scope>
    <scope>IDENTIFICATION BY MASS SPECTROMETRY [LARGE SCALE ANALYSIS]</scope>
    <source>
        <tissue>Kidney</tissue>
        <tissue>Spleen</tissue>
    </source>
</reference>
<reference key="4">
    <citation type="journal article" date="2017" name="Am. J. Hum. Genet.">
        <title>CDK10 mutations in humans and mice cause severe growth retardation, spine malformations, and developmental delays.</title>
        <authorList>
            <person name="Windpassinger C."/>
            <person name="Piard J."/>
            <person name="Bonnard C."/>
            <person name="Alfadhel M."/>
            <person name="Lim S."/>
            <person name="Bisteau X."/>
            <person name="Blouin S."/>
            <person name="Ali N.B."/>
            <person name="Ng A.Y.J."/>
            <person name="Lu H."/>
            <person name="Tohari S."/>
            <person name="Talib S.Z.A."/>
            <person name="van Hul N."/>
            <person name="Caldez M.J."/>
            <person name="Van Maldergem L."/>
            <person name="Yigit G."/>
            <person name="Kayserili H."/>
            <person name="Youssef S.A."/>
            <person name="Coppola V."/>
            <person name="de Bruin A."/>
            <person name="Tessarollo L."/>
            <person name="Choi H."/>
            <person name="Rupp V."/>
            <person name="Roetzer K."/>
            <person name="Roschger P."/>
            <person name="Klaushofer K."/>
            <person name="Altmueller J."/>
            <person name="Roy S."/>
            <person name="Venkatesh B."/>
            <person name="Ganger R."/>
            <person name="Grill F."/>
            <person name="Ben Chehida F."/>
            <person name="Wollnik B."/>
            <person name="Altunoglu U."/>
            <person name="Al Kaissi A."/>
            <person name="Reversade B."/>
            <person name="Kaldis P."/>
        </authorList>
    </citation>
    <scope>DISRUPTION PHENOTYPE</scope>
</reference>
<gene>
    <name type="primary">Cdk10</name>
</gene>
<sequence>MAEVDLESDQIRLKCIRKEGFFTVPPEHRLGRCRSVKEFEKLNRIGEGTYGIVYRARDTQTDEIVALKKVRMDKEKDGIPISSLREITLLLRLRHPNIVELKEVVVGNHLESIFLVMGYCEQDLASLLENMPTPFSEAQVKCIMLQVLRGLQYLHRNFIIHRDLKVSNLLMTDKGCVKTADFGLARAYGVPVKPMTPKVVTLWYRAPELLLGTTTQTTSIDMWAVGCILAELLAHKPLLPGTSEIHQIDLIVQLLGTPSENIWPGFSKLPLAGQYSLRKQPYNNLKHKFPWLSEAGLRLLNFLFMYDPKKRATSGDCLESSYFKEKPLPCEPELMPTFPHHRNKRAAPAAAEGQSKRCRP</sequence>
<accession>Q3UMM4</accession>
<accession>Q3UZD2</accession>
<keyword id="KW-0067">ATP-binding</keyword>
<keyword id="KW-0966">Cell projection</keyword>
<keyword id="KW-0970">Cilium biogenesis/degradation</keyword>
<keyword id="KW-0963">Cytoplasm</keyword>
<keyword id="KW-0206">Cytoskeleton</keyword>
<keyword id="KW-0418">Kinase</keyword>
<keyword id="KW-0547">Nucleotide-binding</keyword>
<keyword id="KW-0597">Phosphoprotein</keyword>
<keyword id="KW-1185">Reference proteome</keyword>
<keyword id="KW-0723">Serine/threonine-protein kinase</keyword>
<keyword id="KW-0808">Transferase</keyword>
<name>CDK10_MOUSE</name>
<organism>
    <name type="scientific">Mus musculus</name>
    <name type="common">Mouse</name>
    <dbReference type="NCBI Taxonomy" id="10090"/>
    <lineage>
        <taxon>Eukaryota</taxon>
        <taxon>Metazoa</taxon>
        <taxon>Chordata</taxon>
        <taxon>Craniata</taxon>
        <taxon>Vertebrata</taxon>
        <taxon>Euteleostomi</taxon>
        <taxon>Mammalia</taxon>
        <taxon>Eutheria</taxon>
        <taxon>Euarchontoglires</taxon>
        <taxon>Glires</taxon>
        <taxon>Rodentia</taxon>
        <taxon>Myomorpha</taxon>
        <taxon>Muroidea</taxon>
        <taxon>Muridae</taxon>
        <taxon>Murinae</taxon>
        <taxon>Mus</taxon>
        <taxon>Mus</taxon>
    </lineage>
</organism>
<comment type="function">
    <text evidence="1">Cyclin-dependent kinase that phosphorylates the transcription factor ETS2 (in vitro) and positively controls its proteasomal degradation (in cells). Involved in the regulation of actin cytoskeleton organization through the phosphorylation of actin dynamics regulators such as PKN2. Is a negative regulator of ciliogenesis through phosphorylation of PKN2 and promotion of RhoA signaling.</text>
</comment>
<comment type="catalytic activity">
    <reaction>
        <text>L-seryl-[protein] + ATP = O-phospho-L-seryl-[protein] + ADP + H(+)</text>
        <dbReference type="Rhea" id="RHEA:17989"/>
        <dbReference type="Rhea" id="RHEA-COMP:9863"/>
        <dbReference type="Rhea" id="RHEA-COMP:11604"/>
        <dbReference type="ChEBI" id="CHEBI:15378"/>
        <dbReference type="ChEBI" id="CHEBI:29999"/>
        <dbReference type="ChEBI" id="CHEBI:30616"/>
        <dbReference type="ChEBI" id="CHEBI:83421"/>
        <dbReference type="ChEBI" id="CHEBI:456216"/>
        <dbReference type="EC" id="2.7.11.22"/>
    </reaction>
</comment>
<comment type="catalytic activity">
    <reaction>
        <text>L-threonyl-[protein] + ATP = O-phospho-L-threonyl-[protein] + ADP + H(+)</text>
        <dbReference type="Rhea" id="RHEA:46608"/>
        <dbReference type="Rhea" id="RHEA-COMP:11060"/>
        <dbReference type="Rhea" id="RHEA-COMP:11605"/>
        <dbReference type="ChEBI" id="CHEBI:15378"/>
        <dbReference type="ChEBI" id="CHEBI:30013"/>
        <dbReference type="ChEBI" id="CHEBI:30616"/>
        <dbReference type="ChEBI" id="CHEBI:61977"/>
        <dbReference type="ChEBI" id="CHEBI:456216"/>
        <dbReference type="EC" id="2.7.11.22"/>
    </reaction>
</comment>
<comment type="subunit">
    <text evidence="1">Heterodimer with CCNQ, the interaction is required for kinase activity. Interacts with ETS2. Interacts with PRK2.</text>
</comment>
<comment type="subcellular location">
    <subcellularLocation>
        <location evidence="1">Cytoplasm</location>
        <location evidence="1">Cytoskeleton</location>
        <location evidence="1">Cilium basal body</location>
    </subcellularLocation>
</comment>
<comment type="disruption phenotype">
    <text evidence="5">CDK10 knockout results in partial prenatal lethality. Surviving mice display severe growth retardation, a reduced volume of mineralized matrix in the head, femur, tibia and fibula, bifidity or clefting of C1 (atlas) or C2 (axis), and absence of the dens. Additional defects are present in the kidney, lung, heart, spleen, liver, and muscle. At cellular level, CDK10 knockout does not affect cell proliferation. However, knocked-out mouse embryonic fibroblasts (MEFs) develop longer cilia.</text>
</comment>
<comment type="similarity">
    <text evidence="6">Belongs to the protein kinase superfamily. CMGC Ser/Thr protein kinase family. CDC2/CDKX subfamily.</text>
</comment>
<protein>
    <recommendedName>
        <fullName>Cyclin-dependent kinase 10</fullName>
        <ecNumber>2.7.11.22</ecNumber>
    </recommendedName>
    <alternativeName>
        <fullName>Cell division protein kinase 10</fullName>
    </alternativeName>
</protein>